<name>5HT1A_PONPY</name>
<organism>
    <name type="scientific">Pongo pygmaeus</name>
    <name type="common">Bornean orangutan</name>
    <dbReference type="NCBI Taxonomy" id="9600"/>
    <lineage>
        <taxon>Eukaryota</taxon>
        <taxon>Metazoa</taxon>
        <taxon>Chordata</taxon>
        <taxon>Craniata</taxon>
        <taxon>Vertebrata</taxon>
        <taxon>Euteleostomi</taxon>
        <taxon>Mammalia</taxon>
        <taxon>Eutheria</taxon>
        <taxon>Euarchontoglires</taxon>
        <taxon>Primates</taxon>
        <taxon>Haplorrhini</taxon>
        <taxon>Catarrhini</taxon>
        <taxon>Hominidae</taxon>
        <taxon>Pongo</taxon>
    </lineage>
</organism>
<accession>Q9N296</accession>
<feature type="chain" id="PRO_0000068906" description="5-hydroxytryptamine receptor 1A">
    <location>
        <begin position="1"/>
        <end position="422"/>
    </location>
</feature>
<feature type="topological domain" description="Extracellular" evidence="1">
    <location>
        <begin position="1"/>
        <end position="38"/>
    </location>
</feature>
<feature type="transmembrane region" description="Helical; Name=1" evidence="1">
    <location>
        <begin position="39"/>
        <end position="59"/>
    </location>
</feature>
<feature type="topological domain" description="Cytoplasmic" evidence="1">
    <location>
        <begin position="60"/>
        <end position="73"/>
    </location>
</feature>
<feature type="transmembrane region" description="Helical; Name=2" evidence="1">
    <location>
        <begin position="74"/>
        <end position="98"/>
    </location>
</feature>
<feature type="topological domain" description="Extracellular" evidence="1">
    <location>
        <begin position="99"/>
        <end position="107"/>
    </location>
</feature>
<feature type="transmembrane region" description="Helical; Name=3" evidence="1">
    <location>
        <begin position="108"/>
        <end position="132"/>
    </location>
</feature>
<feature type="topological domain" description="Cytoplasmic" evidence="1">
    <location>
        <begin position="133"/>
        <end position="152"/>
    </location>
</feature>
<feature type="transmembrane region" description="Helical; Name=4" evidence="1">
    <location>
        <begin position="153"/>
        <end position="174"/>
    </location>
</feature>
<feature type="topological domain" description="Extracellular" evidence="1">
    <location>
        <begin position="175"/>
        <end position="193"/>
    </location>
</feature>
<feature type="transmembrane region" description="Helical; Name=5" evidence="1">
    <location>
        <begin position="194"/>
        <end position="216"/>
    </location>
</feature>
<feature type="topological domain" description="Cytoplasmic" evidence="1">
    <location>
        <begin position="217"/>
        <end position="346"/>
    </location>
</feature>
<feature type="transmembrane region" description="Helical; Name=6" evidence="1">
    <location>
        <begin position="347"/>
        <end position="370"/>
    </location>
</feature>
<feature type="topological domain" description="Extracellular" evidence="1">
    <location>
        <begin position="371"/>
        <end position="378"/>
    </location>
</feature>
<feature type="transmembrane region" description="Helical; Name=7" evidence="1">
    <location>
        <begin position="379"/>
        <end position="403"/>
    </location>
</feature>
<feature type="topological domain" description="Cytoplasmic" evidence="1">
    <location>
        <begin position="404"/>
        <end position="422"/>
    </location>
</feature>
<feature type="region of interest" description="Disordered" evidence="6">
    <location>
        <begin position="1"/>
        <end position="23"/>
    </location>
</feature>
<feature type="region of interest" description="Disordered" evidence="6">
    <location>
        <begin position="235"/>
        <end position="263"/>
    </location>
</feature>
<feature type="short sequence motif" description="DRY motif; important for ligand-induced conformation changes" evidence="3">
    <location>
        <begin position="133"/>
        <end position="135"/>
    </location>
</feature>
<feature type="short sequence motif" description="NPxxY motif; important for ligand-induced conformation changes and signaling" evidence="3">
    <location>
        <begin position="396"/>
        <end position="400"/>
    </location>
</feature>
<feature type="binding site" evidence="1">
    <location>
        <position position="116"/>
    </location>
    <ligand>
        <name>serotonin</name>
        <dbReference type="ChEBI" id="CHEBI:350546"/>
    </ligand>
</feature>
<feature type="binding site" evidence="1">
    <location>
        <position position="120"/>
    </location>
    <ligand>
        <name>serotonin</name>
        <dbReference type="ChEBI" id="CHEBI:350546"/>
    </ligand>
</feature>
<feature type="binding site" evidence="1">
    <location>
        <position position="314"/>
    </location>
    <ligand>
        <name>1D-myo-inositol 4-phosphate</name>
        <dbReference type="ChEBI" id="CHEBI:58469"/>
    </ligand>
</feature>
<feature type="binding site" evidence="1">
    <location>
        <position position="345"/>
    </location>
    <ligand>
        <name>1D-myo-inositol 4-phosphate</name>
        <dbReference type="ChEBI" id="CHEBI:58469"/>
    </ligand>
</feature>
<feature type="binding site" evidence="1">
    <location>
        <position position="346"/>
    </location>
    <ligand>
        <name>1D-myo-inositol 4-phosphate</name>
        <dbReference type="ChEBI" id="CHEBI:58469"/>
    </ligand>
</feature>
<feature type="binding site" evidence="1">
    <location>
        <position position="352"/>
    </location>
    <ligand>
        <name>1D-myo-inositol 4-phosphate</name>
        <dbReference type="ChEBI" id="CHEBI:58469"/>
    </ligand>
</feature>
<feature type="binding site" evidence="1">
    <location>
        <position position="403"/>
    </location>
    <ligand>
        <name>1D-myo-inositol 4-phosphate</name>
        <dbReference type="ChEBI" id="CHEBI:58469"/>
    </ligand>
</feature>
<feature type="binding site" evidence="1">
    <location>
        <position position="404"/>
    </location>
    <ligand>
        <name>1D-myo-inositol 4-phosphate</name>
        <dbReference type="ChEBI" id="CHEBI:58469"/>
    </ligand>
</feature>
<feature type="binding site" evidence="1">
    <location>
        <position position="405"/>
    </location>
    <ligand>
        <name>1D-myo-inositol 4-phosphate</name>
        <dbReference type="ChEBI" id="CHEBI:58469"/>
    </ligand>
</feature>
<feature type="glycosylation site" description="N-linked (GlcNAc...) asparagine" evidence="4">
    <location>
        <position position="10"/>
    </location>
</feature>
<feature type="glycosylation site" description="N-linked (GlcNAc...) asparagine" evidence="4">
    <location>
        <position position="11"/>
    </location>
</feature>
<feature type="glycosylation site" description="N-linked (GlcNAc...) asparagine" evidence="4">
    <location>
        <position position="24"/>
    </location>
</feature>
<feature type="disulfide bond" evidence="5">
    <location>
        <begin position="109"/>
        <end position="187"/>
    </location>
</feature>
<protein>
    <recommendedName>
        <fullName>5-hydroxytryptamine receptor 1A</fullName>
        <shortName>5-HT-1A</shortName>
        <shortName>5-HT1A</shortName>
    </recommendedName>
    <alternativeName>
        <fullName>Serotonin receptor 1A</fullName>
    </alternativeName>
</protein>
<proteinExistence type="inferred from homology"/>
<comment type="function">
    <text evidence="1">G-protein coupled receptor for 5-hydroxytryptamine (serotonin). Also functions as a receptor for various drugs and psychoactive substances. Ligand binding causes a conformation change that triggers signaling via guanine nucleotide-binding proteins (G proteins) and modulates the activity of downstream effectors, such as adenylate cyclase. HTR1A is coupled to G(i)/G(o) G alpha proteins and mediates inhibitory neurotransmission: signaling inhibits adenylate cyclase activity and activates a phosphatidylinositol-calcium second messenger system that regulates the release of Ca(2+) ions from intracellular stores. Beta-arrestin family members regulate signaling by mediating both receptor desensitization and resensitization processes.</text>
</comment>
<comment type="activity regulation">
    <text evidence="1">G-protein coupled receptor activity is regulated by lipids: phosphatidylinositol 4-phosphate increases HTR1A-mediated activity.</text>
</comment>
<comment type="subunit">
    <text evidence="1 2">Heterodimer; heterodimerizes with GPER1 (By similarity). Interacts with YIF1B (By similarity). Interacts with GPR39 and GALR1 (By similarity).</text>
</comment>
<comment type="subcellular location">
    <subcellularLocation>
        <location evidence="1">Cell membrane</location>
        <topology evidence="1">Multi-pass membrane protein</topology>
    </subcellularLocation>
    <subcellularLocation>
        <location evidence="2">Cell projection</location>
        <location evidence="2">Dendrite</location>
    </subcellularLocation>
</comment>
<comment type="similarity">
    <text evidence="5">Belongs to the G-protein coupled receptor 1 family. 5-hydroxytryptamine receptor subfamily. HTR1A sub-subfamily.</text>
</comment>
<dbReference type="EMBL" id="AB041406">
    <property type="protein sequence ID" value="BAA94491.1"/>
    <property type="molecule type" value="Genomic_DNA"/>
</dbReference>
<dbReference type="RefSeq" id="XP_054345634.1">
    <property type="nucleotide sequence ID" value="XM_054489659.2"/>
</dbReference>
<dbReference type="SMR" id="Q9N296"/>
<dbReference type="GlyCosmos" id="Q9N296">
    <property type="glycosylation" value="3 sites, No reported glycans"/>
</dbReference>
<dbReference type="GeneID" id="129037483"/>
<dbReference type="GO" id="GO:0030425">
    <property type="term" value="C:dendrite"/>
    <property type="evidence" value="ECO:0007669"/>
    <property type="project" value="UniProtKB-SubCell"/>
</dbReference>
<dbReference type="GO" id="GO:0005886">
    <property type="term" value="C:plasma membrane"/>
    <property type="evidence" value="ECO:0000250"/>
    <property type="project" value="UniProtKB"/>
</dbReference>
<dbReference type="GO" id="GO:0004993">
    <property type="term" value="F:G protein-coupled serotonin receptor activity"/>
    <property type="evidence" value="ECO:0000250"/>
    <property type="project" value="UniProtKB"/>
</dbReference>
<dbReference type="GO" id="GO:0001586">
    <property type="term" value="F:Gi/o-coupled serotonin receptor activity"/>
    <property type="evidence" value="ECO:0007669"/>
    <property type="project" value="UniProtKB-ARBA"/>
</dbReference>
<dbReference type="GO" id="GO:0099589">
    <property type="term" value="F:serotonin receptor activity"/>
    <property type="evidence" value="ECO:0007669"/>
    <property type="project" value="UniProtKB-ARBA"/>
</dbReference>
<dbReference type="GO" id="GO:0071880">
    <property type="term" value="P:adenylate cyclase-activating adrenergic receptor signaling pathway"/>
    <property type="evidence" value="ECO:0007669"/>
    <property type="project" value="TreeGrafter"/>
</dbReference>
<dbReference type="GO" id="GO:0007198">
    <property type="term" value="P:adenylate cyclase-inhibiting serotonin receptor signaling pathway"/>
    <property type="evidence" value="ECO:0000250"/>
    <property type="project" value="UniProtKB"/>
</dbReference>
<dbReference type="GO" id="GO:0001662">
    <property type="term" value="P:behavioral fear response"/>
    <property type="evidence" value="ECO:0000250"/>
    <property type="project" value="UniProtKB"/>
</dbReference>
<dbReference type="GO" id="GO:0035640">
    <property type="term" value="P:exploration behavior"/>
    <property type="evidence" value="ECO:0000250"/>
    <property type="project" value="UniProtKB"/>
</dbReference>
<dbReference type="GO" id="GO:0043410">
    <property type="term" value="P:positive regulation of MAPK cascade"/>
    <property type="evidence" value="ECO:0007669"/>
    <property type="project" value="TreeGrafter"/>
</dbReference>
<dbReference type="GO" id="GO:0050795">
    <property type="term" value="P:regulation of behavior"/>
    <property type="evidence" value="ECO:0007669"/>
    <property type="project" value="InterPro"/>
</dbReference>
<dbReference type="GO" id="GO:0042053">
    <property type="term" value="P:regulation of dopamine metabolic process"/>
    <property type="evidence" value="ECO:0000250"/>
    <property type="project" value="UniProtKB"/>
</dbReference>
<dbReference type="GO" id="GO:0046883">
    <property type="term" value="P:regulation of hormone secretion"/>
    <property type="evidence" value="ECO:0007669"/>
    <property type="project" value="InterPro"/>
</dbReference>
<dbReference type="GO" id="GO:0014062">
    <property type="term" value="P:regulation of serotonin secretion"/>
    <property type="evidence" value="ECO:0000250"/>
    <property type="project" value="UniProtKB"/>
</dbReference>
<dbReference type="GO" id="GO:0019229">
    <property type="term" value="P:regulation of vasoconstriction"/>
    <property type="evidence" value="ECO:0007669"/>
    <property type="project" value="InterPro"/>
</dbReference>
<dbReference type="GO" id="GO:0042428">
    <property type="term" value="P:serotonin metabolic process"/>
    <property type="evidence" value="ECO:0000250"/>
    <property type="project" value="UniProtKB"/>
</dbReference>
<dbReference type="GO" id="GO:0007210">
    <property type="term" value="P:serotonin receptor signaling pathway"/>
    <property type="evidence" value="ECO:0000250"/>
    <property type="project" value="UniProtKB"/>
</dbReference>
<dbReference type="CDD" id="cd15330">
    <property type="entry name" value="7tmA_5-HT1A_vertebrates"/>
    <property type="match status" value="1"/>
</dbReference>
<dbReference type="Gene3D" id="1.20.1070.10">
    <property type="entry name" value="Rhodopsin 7-helix transmembrane proteins"/>
    <property type="match status" value="1"/>
</dbReference>
<dbReference type="InterPro" id="IPR000610">
    <property type="entry name" value="5HT1A_rcpt"/>
</dbReference>
<dbReference type="InterPro" id="IPR002231">
    <property type="entry name" value="5HT_rcpt"/>
</dbReference>
<dbReference type="InterPro" id="IPR000276">
    <property type="entry name" value="GPCR_Rhodpsn"/>
</dbReference>
<dbReference type="InterPro" id="IPR017452">
    <property type="entry name" value="GPCR_Rhodpsn_7TM"/>
</dbReference>
<dbReference type="PANTHER" id="PTHR24248:SF191">
    <property type="entry name" value="5-HYDROXYTRYPTAMINE RECEPTOR 1A"/>
    <property type="match status" value="1"/>
</dbReference>
<dbReference type="PANTHER" id="PTHR24248">
    <property type="entry name" value="ADRENERGIC RECEPTOR-RELATED G-PROTEIN COUPLED RECEPTOR"/>
    <property type="match status" value="1"/>
</dbReference>
<dbReference type="Pfam" id="PF00001">
    <property type="entry name" value="7tm_1"/>
    <property type="match status" value="1"/>
</dbReference>
<dbReference type="PRINTS" id="PR00512">
    <property type="entry name" value="5HT1ARECEPTR"/>
</dbReference>
<dbReference type="PRINTS" id="PR01101">
    <property type="entry name" value="5HTRECEPTOR"/>
</dbReference>
<dbReference type="PRINTS" id="PR00237">
    <property type="entry name" value="GPCRRHODOPSN"/>
</dbReference>
<dbReference type="SMART" id="SM01381">
    <property type="entry name" value="7TM_GPCR_Srsx"/>
    <property type="match status" value="1"/>
</dbReference>
<dbReference type="SUPFAM" id="SSF81321">
    <property type="entry name" value="Family A G protein-coupled receptor-like"/>
    <property type="match status" value="1"/>
</dbReference>
<dbReference type="PROSITE" id="PS00237">
    <property type="entry name" value="G_PROTEIN_RECEP_F1_1"/>
    <property type="match status" value="1"/>
</dbReference>
<dbReference type="PROSITE" id="PS50262">
    <property type="entry name" value="G_PROTEIN_RECEP_F1_2"/>
    <property type="match status" value="1"/>
</dbReference>
<evidence type="ECO:0000250" key="1">
    <source>
        <dbReference type="UniProtKB" id="P08908"/>
    </source>
</evidence>
<evidence type="ECO:0000250" key="2">
    <source>
        <dbReference type="UniProtKB" id="P19327"/>
    </source>
</evidence>
<evidence type="ECO:0000250" key="3">
    <source>
        <dbReference type="UniProtKB" id="P41595"/>
    </source>
</evidence>
<evidence type="ECO:0000255" key="4"/>
<evidence type="ECO:0000255" key="5">
    <source>
        <dbReference type="PROSITE-ProRule" id="PRU00521"/>
    </source>
</evidence>
<evidence type="ECO:0000256" key="6">
    <source>
        <dbReference type="SAM" id="MobiDB-lite"/>
    </source>
</evidence>
<gene>
    <name type="primary">HTR1A</name>
</gene>
<reference key="1">
    <citation type="journal article" date="2004" name="Mol. Biol. Evol.">
        <title>Human-specific amino acid changes found in 103 protein-coding genes.</title>
        <authorList>
            <person name="Kitano T."/>
            <person name="Liu Y.-H."/>
            <person name="Ueda S."/>
            <person name="Saitou N."/>
        </authorList>
    </citation>
    <scope>NUCLEOTIDE SEQUENCE [GENOMIC DNA]</scope>
    <source>
        <strain>Isolate oran-Po13</strain>
    </source>
</reference>
<keyword id="KW-0085">Behavior</keyword>
<keyword id="KW-1003">Cell membrane</keyword>
<keyword id="KW-0966">Cell projection</keyword>
<keyword id="KW-1015">Disulfide bond</keyword>
<keyword id="KW-0297">G-protein coupled receptor</keyword>
<keyword id="KW-0325">Glycoprotein</keyword>
<keyword id="KW-0472">Membrane</keyword>
<keyword id="KW-0675">Receptor</keyword>
<keyword id="KW-0807">Transducer</keyword>
<keyword id="KW-0812">Transmembrane</keyword>
<keyword id="KW-1133">Transmembrane helix</keyword>
<sequence length="422" mass="46122">MDVLSPGQGNNTTSPPAPFETGGNTTGISDVTFSYQVITSLLLGTLIFCAVLGNACVVAAIALERSLQNVANYLIGSLAVTDLMVSVLVLPMAALYQVLNKWTLGQVTCDLFIALDVLCCTSSILHLCAIALDRYWAITDPIDYVNKRTPRRAAALISLTWLIGFLISIPPMLGWRTPEDRSDPDACTISKDHGYTIYSTFGAFYIPLLLMLVLYGRIFRAARFRIRKTVKKVEKTGADTHHGASPAPQPKKSVNGESGSRNWRLGVESKAGGGLCANGAVRQGDDGAALEVIEVHRVGNSKEHLPLPSEAGPTPCAPASFERKNERNAEAKRKMALARERKTVKTLGIIMGTFILCWLPFFIVALVLPFCESSCHMPTLLGAIINWLGYSNSLLNPVIYAYFNKDFQNAFKKIIKCKFCRQ</sequence>